<gene>
    <name evidence="1" type="primary">rbfA</name>
    <name type="ordered locus">JTY_2853</name>
</gene>
<sequence>MADAARARRLAKRIAAIVASAIEYEIKDPGLAGVTITDAKVTADLHDATVYYTVMGRTLHDEPNCAGAAAALERAKGVLRTKVGAGTGVRFTPTLTFTLDTISDSVHRMDELLARARAADADLARVRVGAKPAGEADPYRDNGSVAQSPAPGGLGIRTSDGPEAVEAPLTCGGDTGDDDRPKE</sequence>
<feature type="chain" id="PRO_1000193267" description="Ribosome-binding factor A">
    <location>
        <begin position="1"/>
        <end position="183"/>
    </location>
</feature>
<feature type="region of interest" description="Disordered" evidence="2">
    <location>
        <begin position="132"/>
        <end position="183"/>
    </location>
</feature>
<dbReference type="EMBL" id="AP010918">
    <property type="protein sequence ID" value="BAH27131.1"/>
    <property type="molecule type" value="Genomic_DNA"/>
</dbReference>
<dbReference type="RefSeq" id="WP_003414508.1">
    <property type="nucleotide sequence ID" value="NZ_CP014566.1"/>
</dbReference>
<dbReference type="SMR" id="C1AFV2"/>
<dbReference type="KEGG" id="mbt:JTY_2853"/>
<dbReference type="HOGENOM" id="CLU_089475_0_0_11"/>
<dbReference type="GO" id="GO:0005829">
    <property type="term" value="C:cytosol"/>
    <property type="evidence" value="ECO:0007669"/>
    <property type="project" value="TreeGrafter"/>
</dbReference>
<dbReference type="GO" id="GO:0043024">
    <property type="term" value="F:ribosomal small subunit binding"/>
    <property type="evidence" value="ECO:0007669"/>
    <property type="project" value="TreeGrafter"/>
</dbReference>
<dbReference type="GO" id="GO:0030490">
    <property type="term" value="P:maturation of SSU-rRNA"/>
    <property type="evidence" value="ECO:0007669"/>
    <property type="project" value="UniProtKB-UniRule"/>
</dbReference>
<dbReference type="FunFam" id="3.30.300.20:FF:000018">
    <property type="entry name" value="Ribosome-binding factor A"/>
    <property type="match status" value="1"/>
</dbReference>
<dbReference type="Gene3D" id="3.30.300.20">
    <property type="match status" value="1"/>
</dbReference>
<dbReference type="HAMAP" id="MF_00003">
    <property type="entry name" value="RbfA"/>
    <property type="match status" value="1"/>
</dbReference>
<dbReference type="InterPro" id="IPR015946">
    <property type="entry name" value="KH_dom-like_a/b"/>
</dbReference>
<dbReference type="InterPro" id="IPR000238">
    <property type="entry name" value="RbfA"/>
</dbReference>
<dbReference type="InterPro" id="IPR023799">
    <property type="entry name" value="RbfA_dom_sf"/>
</dbReference>
<dbReference type="InterPro" id="IPR020053">
    <property type="entry name" value="Ribosome-bd_factorA_CS"/>
</dbReference>
<dbReference type="NCBIfam" id="TIGR00082">
    <property type="entry name" value="rbfA"/>
    <property type="match status" value="1"/>
</dbReference>
<dbReference type="PANTHER" id="PTHR33515">
    <property type="entry name" value="RIBOSOME-BINDING FACTOR A, CHLOROPLASTIC-RELATED"/>
    <property type="match status" value="1"/>
</dbReference>
<dbReference type="PANTHER" id="PTHR33515:SF1">
    <property type="entry name" value="RIBOSOME-BINDING FACTOR A, CHLOROPLASTIC-RELATED"/>
    <property type="match status" value="1"/>
</dbReference>
<dbReference type="Pfam" id="PF02033">
    <property type="entry name" value="RBFA"/>
    <property type="match status" value="1"/>
</dbReference>
<dbReference type="SUPFAM" id="SSF89919">
    <property type="entry name" value="Ribosome-binding factor A, RbfA"/>
    <property type="match status" value="1"/>
</dbReference>
<dbReference type="PROSITE" id="PS01319">
    <property type="entry name" value="RBFA"/>
    <property type="match status" value="1"/>
</dbReference>
<reference key="1">
    <citation type="journal article" date="2009" name="Vaccine">
        <title>Whole genome sequence analysis of Mycobacterium bovis bacillus Calmette-Guerin (BCG) Tokyo 172: a comparative study of BCG vaccine substrains.</title>
        <authorList>
            <person name="Seki M."/>
            <person name="Honda I."/>
            <person name="Fujita I."/>
            <person name="Yano I."/>
            <person name="Yamamoto S."/>
            <person name="Koyama A."/>
        </authorList>
    </citation>
    <scope>NUCLEOTIDE SEQUENCE [LARGE SCALE GENOMIC DNA]</scope>
    <source>
        <strain>BCG / Tokyo 172 / ATCC 35737 / TMC 1019</strain>
    </source>
</reference>
<evidence type="ECO:0000255" key="1">
    <source>
        <dbReference type="HAMAP-Rule" id="MF_00003"/>
    </source>
</evidence>
<evidence type="ECO:0000256" key="2">
    <source>
        <dbReference type="SAM" id="MobiDB-lite"/>
    </source>
</evidence>
<accession>C1AFV2</accession>
<protein>
    <recommendedName>
        <fullName evidence="1">Ribosome-binding factor A</fullName>
    </recommendedName>
</protein>
<comment type="function">
    <text evidence="1">One of several proteins that assist in the late maturation steps of the functional core of the 30S ribosomal subunit. Associates with free 30S ribosomal subunits (but not with 30S subunits that are part of 70S ribosomes or polysomes). Required for efficient processing of 16S rRNA. May interact with the 5'-terminal helix region of 16S rRNA.</text>
</comment>
<comment type="subunit">
    <text evidence="1">Monomer. Binds 30S ribosomal subunits, but not 50S ribosomal subunits or 70S ribosomes.</text>
</comment>
<comment type="subcellular location">
    <subcellularLocation>
        <location evidence="1">Cytoplasm</location>
    </subcellularLocation>
</comment>
<comment type="similarity">
    <text evidence="1">Belongs to the RbfA family.</text>
</comment>
<proteinExistence type="inferred from homology"/>
<name>RBFA_MYCBT</name>
<organism>
    <name type="scientific">Mycobacterium bovis (strain BCG / Tokyo 172 / ATCC 35737 / TMC 1019)</name>
    <dbReference type="NCBI Taxonomy" id="561275"/>
    <lineage>
        <taxon>Bacteria</taxon>
        <taxon>Bacillati</taxon>
        <taxon>Actinomycetota</taxon>
        <taxon>Actinomycetes</taxon>
        <taxon>Mycobacteriales</taxon>
        <taxon>Mycobacteriaceae</taxon>
        <taxon>Mycobacterium</taxon>
        <taxon>Mycobacterium tuberculosis complex</taxon>
    </lineage>
</organism>
<keyword id="KW-0963">Cytoplasm</keyword>
<keyword id="KW-0690">Ribosome biogenesis</keyword>